<evidence type="ECO:0000255" key="1">
    <source>
        <dbReference type="PROSITE-ProRule" id="PRU00145"/>
    </source>
</evidence>
<evidence type="ECO:0000255" key="2">
    <source>
        <dbReference type="PROSITE-ProRule" id="PRU00288"/>
    </source>
</evidence>
<evidence type="ECO:0000256" key="3">
    <source>
        <dbReference type="SAM" id="MobiDB-lite"/>
    </source>
</evidence>
<evidence type="ECO:0000303" key="4">
    <source>
    </source>
</evidence>
<evidence type="ECO:0000303" key="5">
    <source ref="1"/>
</evidence>
<evidence type="ECO:0000305" key="6"/>
<feature type="chain" id="PRO_0000356159" description="Arf-GAP with coiled-coil, ANK repeat and PH domain-containing protein 3">
    <location>
        <begin position="1"/>
        <end position="834"/>
    </location>
</feature>
<feature type="domain" description="PH" evidence="1">
    <location>
        <begin position="268"/>
        <end position="363"/>
    </location>
</feature>
<feature type="domain" description="Arf-GAP" evidence="2">
    <location>
        <begin position="403"/>
        <end position="525"/>
    </location>
</feature>
<feature type="repeat" description="ANK 1">
    <location>
        <begin position="702"/>
        <end position="731"/>
    </location>
</feature>
<feature type="repeat" description="ANK 2">
    <location>
        <begin position="735"/>
        <end position="764"/>
    </location>
</feature>
<feature type="repeat" description="ANK 3">
    <location>
        <begin position="768"/>
        <end position="797"/>
    </location>
</feature>
<feature type="zinc finger region" description="C4-type" evidence="2">
    <location>
        <begin position="418"/>
        <end position="441"/>
    </location>
</feature>
<feature type="region of interest" description="Disordered" evidence="3">
    <location>
        <begin position="375"/>
        <end position="400"/>
    </location>
</feature>
<feature type="region of interest" description="Disordered" evidence="3">
    <location>
        <begin position="633"/>
        <end position="653"/>
    </location>
</feature>
<feature type="compositionally biased region" description="Polar residues" evidence="3">
    <location>
        <begin position="382"/>
        <end position="392"/>
    </location>
</feature>
<feature type="compositionally biased region" description="Acidic residues" evidence="3">
    <location>
        <begin position="634"/>
        <end position="653"/>
    </location>
</feature>
<feature type="splice variant" id="VSP_035992" description="In isoform 3." evidence="6">
    <location>
        <begin position="1"/>
        <end position="270"/>
    </location>
</feature>
<feature type="splice variant" id="VSP_035993" description="In isoform 2." evidence="4 5">
    <location>
        <begin position="1"/>
        <end position="42"/>
    </location>
</feature>
<feature type="splice variant" id="VSP_035994" description="In isoform 2." evidence="4 5">
    <original>SLSSDSGLGGSSDGSSDVLAFGSGSVVDSVTEEE</original>
    <variation>K</variation>
    <location>
        <begin position="605"/>
        <end position="638"/>
    </location>
</feature>
<feature type="sequence conflict" description="In Ref. 5; AAH51194." evidence="6" ref="5">
    <original>I</original>
    <variation>N</variation>
    <location>
        <position position="94"/>
    </location>
</feature>
<comment type="function">
    <text evidence="6">GTPase-activating protein for the ADP ribosylation factor family.</text>
</comment>
<comment type="interaction">
    <interactant intactId="EBI-715726">
        <id>Q96P50</id>
    </interactant>
    <interactant intactId="EBI-4401196">
        <id>Q15057</id>
        <label>ACAP2</label>
    </interactant>
    <organismsDiffer>false</organismsDiffer>
    <experiments>4</experiments>
</comment>
<comment type="alternative products">
    <event type="alternative splicing"/>
    <isoform>
        <id>Q96P50-3</id>
        <name>1</name>
        <sequence type="displayed"/>
    </isoform>
    <isoform>
        <id>Q96P50-1</id>
        <name>2</name>
        <sequence type="described" ref="VSP_035993 VSP_035994"/>
    </isoform>
    <isoform>
        <id>Q96P50-4</id>
        <name>3</name>
        <sequence type="described" ref="VSP_035992"/>
    </isoform>
</comment>
<comment type="sequence caution" evidence="6">
    <conflict type="erroneous initiation">
        <sequence resource="EMBL-CDS" id="BAB21807"/>
    </conflict>
</comment>
<gene>
    <name type="primary">ACAP3</name>
    <name type="synonym">CENTB5</name>
    <name type="synonym">KIAA1716</name>
</gene>
<dbReference type="EMBL" id="AF411981">
    <property type="protein sequence ID" value="AAL04165.1"/>
    <property type="molecule type" value="mRNA"/>
</dbReference>
<dbReference type="EMBL" id="AB051503">
    <property type="protein sequence ID" value="BAB21807.1"/>
    <property type="status" value="ALT_INIT"/>
    <property type="molecule type" value="mRNA"/>
</dbReference>
<dbReference type="EMBL" id="AL139287">
    <property type="status" value="NOT_ANNOTATED_CDS"/>
    <property type="molecule type" value="Genomic_DNA"/>
</dbReference>
<dbReference type="EMBL" id="AL162741">
    <property type="status" value="NOT_ANNOTATED_CDS"/>
    <property type="molecule type" value="Genomic_DNA"/>
</dbReference>
<dbReference type="EMBL" id="CH471183">
    <property type="protein sequence ID" value="EAW56248.1"/>
    <property type="molecule type" value="Genomic_DNA"/>
</dbReference>
<dbReference type="EMBL" id="CH471183">
    <property type="protein sequence ID" value="EAW56249.1"/>
    <property type="molecule type" value="Genomic_DNA"/>
</dbReference>
<dbReference type="EMBL" id="BC004874">
    <property type="protein sequence ID" value="AAH04874.2"/>
    <property type="molecule type" value="mRNA"/>
</dbReference>
<dbReference type="EMBL" id="BC051194">
    <property type="protein sequence ID" value="AAH51194.2"/>
    <property type="molecule type" value="mRNA"/>
</dbReference>
<dbReference type="CCDS" id="CCDS19.2">
    <molecule id="Q96P50-3"/>
</dbReference>
<dbReference type="RefSeq" id="NP_085152.2">
    <molecule id="Q96P50-3"/>
    <property type="nucleotide sequence ID" value="NM_030649.3"/>
</dbReference>
<dbReference type="SMR" id="Q96P50"/>
<dbReference type="BioGRID" id="125546">
    <property type="interactions" value="21"/>
</dbReference>
<dbReference type="FunCoup" id="Q96P50">
    <property type="interactions" value="1528"/>
</dbReference>
<dbReference type="IntAct" id="Q96P50">
    <property type="interactions" value="18"/>
</dbReference>
<dbReference type="MINT" id="Q96P50"/>
<dbReference type="STRING" id="9606.ENSP00000346733"/>
<dbReference type="iPTMnet" id="Q96P50"/>
<dbReference type="PhosphoSitePlus" id="Q96P50"/>
<dbReference type="BioMuta" id="ACAP3"/>
<dbReference type="DMDM" id="218511905"/>
<dbReference type="jPOST" id="Q96P50"/>
<dbReference type="MassIVE" id="Q96P50"/>
<dbReference type="PaxDb" id="9606-ENSP00000346733"/>
<dbReference type="PeptideAtlas" id="Q96P50"/>
<dbReference type="ProteomicsDB" id="77629">
    <molecule id="Q96P50-3"/>
</dbReference>
<dbReference type="ProteomicsDB" id="77630">
    <molecule id="Q96P50-1"/>
</dbReference>
<dbReference type="ProteomicsDB" id="77631">
    <molecule id="Q96P50-4"/>
</dbReference>
<dbReference type="Pumba" id="Q96P50"/>
<dbReference type="Antibodypedia" id="46438">
    <property type="antibodies" value="119 antibodies from 20 providers"/>
</dbReference>
<dbReference type="DNASU" id="116983"/>
<dbReference type="Ensembl" id="ENST00000353662.4">
    <molecule id="Q96P50-1"/>
    <property type="protein sequence ID" value="ENSP00000321139.4"/>
    <property type="gene ID" value="ENSG00000131584.19"/>
</dbReference>
<dbReference type="Ensembl" id="ENST00000354700.10">
    <molecule id="Q96P50-3"/>
    <property type="protein sequence ID" value="ENSP00000346733.5"/>
    <property type="gene ID" value="ENSG00000131584.19"/>
</dbReference>
<dbReference type="GeneID" id="116983"/>
<dbReference type="KEGG" id="hsa:116983"/>
<dbReference type="MANE-Select" id="ENST00000354700.10">
    <property type="protein sequence ID" value="ENSP00000346733.5"/>
    <property type="RefSeq nucleotide sequence ID" value="NM_030649.3"/>
    <property type="RefSeq protein sequence ID" value="NP_085152.2"/>
</dbReference>
<dbReference type="UCSC" id="uc001aeb.3">
    <molecule id="Q96P50-3"/>
    <property type="organism name" value="human"/>
</dbReference>
<dbReference type="AGR" id="HGNC:16754"/>
<dbReference type="CTD" id="116983"/>
<dbReference type="DisGeNET" id="116983"/>
<dbReference type="GeneCards" id="ACAP3"/>
<dbReference type="HGNC" id="HGNC:16754">
    <property type="gene designation" value="ACAP3"/>
</dbReference>
<dbReference type="HPA" id="ENSG00000131584">
    <property type="expression patterns" value="Tissue enhanced (brain)"/>
</dbReference>
<dbReference type="neXtProt" id="NX_Q96P50"/>
<dbReference type="OpenTargets" id="ENSG00000131584"/>
<dbReference type="PharmGKB" id="PA26408"/>
<dbReference type="VEuPathDB" id="HostDB:ENSG00000131584"/>
<dbReference type="eggNOG" id="KOG0521">
    <property type="taxonomic scope" value="Eukaryota"/>
</dbReference>
<dbReference type="GeneTree" id="ENSGT00940000156199"/>
<dbReference type="HOGENOM" id="CLU_012513_0_1_1"/>
<dbReference type="InParanoid" id="Q96P50"/>
<dbReference type="OMA" id="GSVMSCE"/>
<dbReference type="OrthoDB" id="10070851at2759"/>
<dbReference type="PAN-GO" id="Q96P50">
    <property type="GO annotations" value="0 GO annotations based on evolutionary models"/>
</dbReference>
<dbReference type="PhylomeDB" id="Q96P50"/>
<dbReference type="TreeFam" id="TF318315"/>
<dbReference type="PathwayCommons" id="Q96P50"/>
<dbReference type="SignaLink" id="Q96P50"/>
<dbReference type="BioGRID-ORCS" id="116983">
    <property type="hits" value="25 hits in 1152 CRISPR screens"/>
</dbReference>
<dbReference type="GenomeRNAi" id="116983"/>
<dbReference type="Pharos" id="Q96P50">
    <property type="development level" value="Tbio"/>
</dbReference>
<dbReference type="PRO" id="PR:Q96P50"/>
<dbReference type="Proteomes" id="UP000005640">
    <property type="component" value="Chromosome 1"/>
</dbReference>
<dbReference type="RNAct" id="Q96P50">
    <property type="molecule type" value="protein"/>
</dbReference>
<dbReference type="Bgee" id="ENSG00000131584">
    <property type="expression patterns" value="Expressed in right hemisphere of cerebellum and 154 other cell types or tissues"/>
</dbReference>
<dbReference type="ExpressionAtlas" id="Q96P50">
    <property type="expression patterns" value="baseline and differential"/>
</dbReference>
<dbReference type="GO" id="GO:0005737">
    <property type="term" value="C:cytoplasm"/>
    <property type="evidence" value="ECO:0007669"/>
    <property type="project" value="InterPro"/>
</dbReference>
<dbReference type="GO" id="GO:0030426">
    <property type="term" value="C:growth cone"/>
    <property type="evidence" value="ECO:0007669"/>
    <property type="project" value="Ensembl"/>
</dbReference>
<dbReference type="GO" id="GO:0005096">
    <property type="term" value="F:GTPase activator activity"/>
    <property type="evidence" value="ECO:0007669"/>
    <property type="project" value="UniProtKB-KW"/>
</dbReference>
<dbReference type="GO" id="GO:0008270">
    <property type="term" value="F:zinc ion binding"/>
    <property type="evidence" value="ECO:0007669"/>
    <property type="project" value="UniProtKB-KW"/>
</dbReference>
<dbReference type="GO" id="GO:0001764">
    <property type="term" value="P:neuron migration"/>
    <property type="evidence" value="ECO:0007669"/>
    <property type="project" value="Ensembl"/>
</dbReference>
<dbReference type="GO" id="GO:0010975">
    <property type="term" value="P:regulation of neuron projection development"/>
    <property type="evidence" value="ECO:0007669"/>
    <property type="project" value="Ensembl"/>
</dbReference>
<dbReference type="CDD" id="cd08850">
    <property type="entry name" value="ArfGap_ACAP3"/>
    <property type="match status" value="1"/>
</dbReference>
<dbReference type="CDD" id="cd07637">
    <property type="entry name" value="BAR_ACAP3"/>
    <property type="match status" value="1"/>
</dbReference>
<dbReference type="CDD" id="cd13250">
    <property type="entry name" value="PH_ACAP"/>
    <property type="match status" value="1"/>
</dbReference>
<dbReference type="FunFam" id="1.10.220.150:FF:000007">
    <property type="entry name" value="Arf-GAP with coiled-coil, ANK repeat and PH domain-containing protein 2"/>
    <property type="match status" value="1"/>
</dbReference>
<dbReference type="FunFam" id="1.25.40.20:FF:000020">
    <property type="entry name" value="Arf-GAP with coiled-coil, ANK repeat and PH domain-containing protein 2"/>
    <property type="match status" value="1"/>
</dbReference>
<dbReference type="FunFam" id="2.30.29.30:FF:000026">
    <property type="entry name" value="Arf-GAP with coiled-coil, ANK repeat and PH domain-containing protein 2"/>
    <property type="match status" value="1"/>
</dbReference>
<dbReference type="FunFam" id="1.20.1270.60:FF:000025">
    <property type="entry name" value="arf-GAP with coiled-coil, ANK repeat and PH domain-containing protein 2"/>
    <property type="match status" value="1"/>
</dbReference>
<dbReference type="Gene3D" id="1.25.40.20">
    <property type="entry name" value="Ankyrin repeat-containing domain"/>
    <property type="match status" value="1"/>
</dbReference>
<dbReference type="Gene3D" id="1.10.220.150">
    <property type="entry name" value="Arf GTPase activating protein"/>
    <property type="match status" value="1"/>
</dbReference>
<dbReference type="Gene3D" id="1.20.1270.60">
    <property type="entry name" value="Arfaptin homology (AH) domain/BAR domain"/>
    <property type="match status" value="1"/>
</dbReference>
<dbReference type="Gene3D" id="2.30.29.30">
    <property type="entry name" value="Pleckstrin-homology domain (PH domain)/Phosphotyrosine-binding domain (PTB)"/>
    <property type="match status" value="1"/>
</dbReference>
<dbReference type="InterPro" id="IPR045258">
    <property type="entry name" value="ACAP1/2/3-like"/>
</dbReference>
<dbReference type="InterPro" id="IPR042695">
    <property type="entry name" value="ACAP3_BAR"/>
</dbReference>
<dbReference type="InterPro" id="IPR027267">
    <property type="entry name" value="AH/BAR_dom_sf"/>
</dbReference>
<dbReference type="InterPro" id="IPR002110">
    <property type="entry name" value="Ankyrin_rpt"/>
</dbReference>
<dbReference type="InterPro" id="IPR036770">
    <property type="entry name" value="Ankyrin_rpt-contain_sf"/>
</dbReference>
<dbReference type="InterPro" id="IPR037278">
    <property type="entry name" value="ARFGAP/RecO"/>
</dbReference>
<dbReference type="InterPro" id="IPR001164">
    <property type="entry name" value="ArfGAP_dom"/>
</dbReference>
<dbReference type="InterPro" id="IPR038508">
    <property type="entry name" value="ArfGAP_dom_sf"/>
</dbReference>
<dbReference type="InterPro" id="IPR004148">
    <property type="entry name" value="BAR_dom"/>
</dbReference>
<dbReference type="InterPro" id="IPR011993">
    <property type="entry name" value="PH-like_dom_sf"/>
</dbReference>
<dbReference type="InterPro" id="IPR001849">
    <property type="entry name" value="PH_domain"/>
</dbReference>
<dbReference type="PANTHER" id="PTHR23180:SF407">
    <property type="entry name" value="ARF-GAP WITH COILED-COIL, ANK REPEAT AND PH DOMAIN-CONTAINING PROTEIN 3"/>
    <property type="match status" value="1"/>
</dbReference>
<dbReference type="PANTHER" id="PTHR23180">
    <property type="entry name" value="CENTAURIN/ARF"/>
    <property type="match status" value="1"/>
</dbReference>
<dbReference type="Pfam" id="PF12796">
    <property type="entry name" value="Ank_2"/>
    <property type="match status" value="1"/>
</dbReference>
<dbReference type="Pfam" id="PF01412">
    <property type="entry name" value="ArfGap"/>
    <property type="match status" value="1"/>
</dbReference>
<dbReference type="Pfam" id="PF16746">
    <property type="entry name" value="BAR_3"/>
    <property type="match status" value="1"/>
</dbReference>
<dbReference type="Pfam" id="PF00169">
    <property type="entry name" value="PH"/>
    <property type="match status" value="1"/>
</dbReference>
<dbReference type="PRINTS" id="PR00405">
    <property type="entry name" value="REVINTRACTNG"/>
</dbReference>
<dbReference type="SMART" id="SM00248">
    <property type="entry name" value="ANK"/>
    <property type="match status" value="2"/>
</dbReference>
<dbReference type="SMART" id="SM00105">
    <property type="entry name" value="ArfGap"/>
    <property type="match status" value="1"/>
</dbReference>
<dbReference type="SMART" id="SM00233">
    <property type="entry name" value="PH"/>
    <property type="match status" value="1"/>
</dbReference>
<dbReference type="SUPFAM" id="SSF48403">
    <property type="entry name" value="Ankyrin repeat"/>
    <property type="match status" value="1"/>
</dbReference>
<dbReference type="SUPFAM" id="SSF57863">
    <property type="entry name" value="ArfGap/RecO-like zinc finger"/>
    <property type="match status" value="1"/>
</dbReference>
<dbReference type="SUPFAM" id="SSF103657">
    <property type="entry name" value="BAR/IMD domain-like"/>
    <property type="match status" value="1"/>
</dbReference>
<dbReference type="SUPFAM" id="SSF50729">
    <property type="entry name" value="PH domain-like"/>
    <property type="match status" value="1"/>
</dbReference>
<dbReference type="PROSITE" id="PS50297">
    <property type="entry name" value="ANK_REP_REGION"/>
    <property type="match status" value="1"/>
</dbReference>
<dbReference type="PROSITE" id="PS50088">
    <property type="entry name" value="ANK_REPEAT"/>
    <property type="match status" value="2"/>
</dbReference>
<dbReference type="PROSITE" id="PS50115">
    <property type="entry name" value="ARFGAP"/>
    <property type="match status" value="1"/>
</dbReference>
<dbReference type="PROSITE" id="PS50003">
    <property type="entry name" value="PH_DOMAIN"/>
    <property type="match status" value="1"/>
</dbReference>
<keyword id="KW-0025">Alternative splicing</keyword>
<keyword id="KW-0040">ANK repeat</keyword>
<keyword id="KW-0343">GTPase activation</keyword>
<keyword id="KW-0479">Metal-binding</keyword>
<keyword id="KW-1267">Proteomics identification</keyword>
<keyword id="KW-1185">Reference proteome</keyword>
<keyword id="KW-0677">Repeat</keyword>
<keyword id="KW-0862">Zinc</keyword>
<keyword id="KW-0863">Zinc-finger</keyword>
<protein>
    <recommendedName>
        <fullName>Arf-GAP with coiled-coil, ANK repeat and PH domain-containing protein 3</fullName>
    </recommendedName>
    <alternativeName>
        <fullName>Centaurin-beta-5</fullName>
        <shortName>Cnt-b5</shortName>
    </alternativeName>
</protein>
<accession>Q96P50</accession>
<accession>B1AMF5</accession>
<accession>Q5TA42</accession>
<accession>Q5TA43</accession>
<accession>Q86UT3</accession>
<accession>Q9BSR9</accession>
<accession>Q9C0E7</accession>
<sequence length="834" mass="92495">MTVEFEECVKDSPRFRATIDEVETDVVEIEAKLDKLVKLCSGMVEAGKAYVSTSRLFVSGVRDLSQQCQGDTVISECLQRFADSLQEVVNYHMILFDQAQRSVRQQLQSFVKEDVRKFKETKKQFDKVREDLELSLVRNAQAPRHRPHEVEEATGALTLTRKCFRHLALDYVLQINVLQAKKKFEILDSMLSFMHAQSSFFQQGYSLLHQLDPYMKKLAAELDQLVIDSAVEKREMERKHAAIQQRTLLQDFSYDESKVEFDVDAPSGVVMEGYLFKRASNAFKTWNRRWFSIQNSQLVYQKKLKDALTVVVDDLRLCSVKPCEDIERRFCFEVLSPTKSCMLQADSEKLRQAWVQAVQASIASAYRESPDSCYSERLDRTASPSTSSIDSATDTRERGVKGESVLQRVQSVAGNSQCGDCGQPDPRWASINLGVLLCIECSGIHRSLGVHCSKVRSLTLDSWEPELLKLMCELGNSAVNQIYEAQCEGAGSRKPTASSSRQDKEAWIKDKYVEKKFLRKAPMAPALEAPRRWRVQKCLRPHSSPRAPTARRKVRLEPVLPCVAALSSVGTLDRKFRRDSLFCPDELDSLFSYFDAGAAGAGPRSLSSDSGLGGSSDGSSDVLAFGSGSVVDSVTEEEGAESEESSGEADGDTEAEAWGLADVRELHPGLLAHRAARARDLPALAAALAHGAEVNWADAEDEGKTPLVQAVLGGSLIVCEFLLQNGADVNQRDSRGRAPLHHATLLGRTGQVCLFLKRGADQHALDQEQRDPLAIAVQAANADIVTLLRLARMAEEMREAEAAPGPPGALAGSPTELQFRRCIQEFISLHLEES</sequence>
<organism>
    <name type="scientific">Homo sapiens</name>
    <name type="common">Human</name>
    <dbReference type="NCBI Taxonomy" id="9606"/>
    <lineage>
        <taxon>Eukaryota</taxon>
        <taxon>Metazoa</taxon>
        <taxon>Chordata</taxon>
        <taxon>Craniata</taxon>
        <taxon>Vertebrata</taxon>
        <taxon>Euteleostomi</taxon>
        <taxon>Mammalia</taxon>
        <taxon>Eutheria</taxon>
        <taxon>Euarchontoglires</taxon>
        <taxon>Primates</taxon>
        <taxon>Haplorrhini</taxon>
        <taxon>Catarrhini</taxon>
        <taxon>Hominidae</taxon>
        <taxon>Homo</taxon>
    </lineage>
</organism>
<name>ACAP3_HUMAN</name>
<proteinExistence type="evidence at protein level"/>
<reference key="1">
    <citation type="submission" date="2001-08" db="EMBL/GenBank/DDBJ databases">
        <title>Centaurin beta5, a new member of centaurin family.</title>
        <authorList>
            <person name="Hong W."/>
        </authorList>
    </citation>
    <scope>NUCLEOTIDE SEQUENCE [MRNA] (ISOFORM 2)</scope>
</reference>
<reference key="2">
    <citation type="journal article" date="2000" name="DNA Res.">
        <title>Prediction of the coding sequences of unidentified human genes. XIX. The complete sequences of 100 new cDNA clones from brain which code for large proteins in vitro.</title>
        <authorList>
            <person name="Nagase T."/>
            <person name="Kikuno R."/>
            <person name="Hattori A."/>
            <person name="Kondo Y."/>
            <person name="Okumura K."/>
            <person name="Ohara O."/>
        </authorList>
    </citation>
    <scope>NUCLEOTIDE SEQUENCE [LARGE SCALE MRNA] (ISOFORM 2)</scope>
    <source>
        <tissue>Brain</tissue>
    </source>
</reference>
<reference key="3">
    <citation type="journal article" date="2006" name="Nature">
        <title>The DNA sequence and biological annotation of human chromosome 1.</title>
        <authorList>
            <person name="Gregory S.G."/>
            <person name="Barlow K.F."/>
            <person name="McLay K.E."/>
            <person name="Kaul R."/>
            <person name="Swarbreck D."/>
            <person name="Dunham A."/>
            <person name="Scott C.E."/>
            <person name="Howe K.L."/>
            <person name="Woodfine K."/>
            <person name="Spencer C.C.A."/>
            <person name="Jones M.C."/>
            <person name="Gillson C."/>
            <person name="Searle S."/>
            <person name="Zhou Y."/>
            <person name="Kokocinski F."/>
            <person name="McDonald L."/>
            <person name="Evans R."/>
            <person name="Phillips K."/>
            <person name="Atkinson A."/>
            <person name="Cooper R."/>
            <person name="Jones C."/>
            <person name="Hall R.E."/>
            <person name="Andrews T.D."/>
            <person name="Lloyd C."/>
            <person name="Ainscough R."/>
            <person name="Almeida J.P."/>
            <person name="Ambrose K.D."/>
            <person name="Anderson F."/>
            <person name="Andrew R.W."/>
            <person name="Ashwell R.I.S."/>
            <person name="Aubin K."/>
            <person name="Babbage A.K."/>
            <person name="Bagguley C.L."/>
            <person name="Bailey J."/>
            <person name="Beasley H."/>
            <person name="Bethel G."/>
            <person name="Bird C.P."/>
            <person name="Bray-Allen S."/>
            <person name="Brown J.Y."/>
            <person name="Brown A.J."/>
            <person name="Buckley D."/>
            <person name="Burton J."/>
            <person name="Bye J."/>
            <person name="Carder C."/>
            <person name="Chapman J.C."/>
            <person name="Clark S.Y."/>
            <person name="Clarke G."/>
            <person name="Clee C."/>
            <person name="Cobley V."/>
            <person name="Collier R.E."/>
            <person name="Corby N."/>
            <person name="Coville G.J."/>
            <person name="Davies J."/>
            <person name="Deadman R."/>
            <person name="Dunn M."/>
            <person name="Earthrowl M."/>
            <person name="Ellington A.G."/>
            <person name="Errington H."/>
            <person name="Frankish A."/>
            <person name="Frankland J."/>
            <person name="French L."/>
            <person name="Garner P."/>
            <person name="Garnett J."/>
            <person name="Gay L."/>
            <person name="Ghori M.R.J."/>
            <person name="Gibson R."/>
            <person name="Gilby L.M."/>
            <person name="Gillett W."/>
            <person name="Glithero R.J."/>
            <person name="Grafham D.V."/>
            <person name="Griffiths C."/>
            <person name="Griffiths-Jones S."/>
            <person name="Grocock R."/>
            <person name="Hammond S."/>
            <person name="Harrison E.S.I."/>
            <person name="Hart E."/>
            <person name="Haugen E."/>
            <person name="Heath P.D."/>
            <person name="Holmes S."/>
            <person name="Holt K."/>
            <person name="Howden P.J."/>
            <person name="Hunt A.R."/>
            <person name="Hunt S.E."/>
            <person name="Hunter G."/>
            <person name="Isherwood J."/>
            <person name="James R."/>
            <person name="Johnson C."/>
            <person name="Johnson D."/>
            <person name="Joy A."/>
            <person name="Kay M."/>
            <person name="Kershaw J.K."/>
            <person name="Kibukawa M."/>
            <person name="Kimberley A.M."/>
            <person name="King A."/>
            <person name="Knights A.J."/>
            <person name="Lad H."/>
            <person name="Laird G."/>
            <person name="Lawlor S."/>
            <person name="Leongamornlert D.A."/>
            <person name="Lloyd D.M."/>
            <person name="Loveland J."/>
            <person name="Lovell J."/>
            <person name="Lush M.J."/>
            <person name="Lyne R."/>
            <person name="Martin S."/>
            <person name="Mashreghi-Mohammadi M."/>
            <person name="Matthews L."/>
            <person name="Matthews N.S.W."/>
            <person name="McLaren S."/>
            <person name="Milne S."/>
            <person name="Mistry S."/>
            <person name="Moore M.J.F."/>
            <person name="Nickerson T."/>
            <person name="O'Dell C.N."/>
            <person name="Oliver K."/>
            <person name="Palmeiri A."/>
            <person name="Palmer S.A."/>
            <person name="Parker A."/>
            <person name="Patel D."/>
            <person name="Pearce A.V."/>
            <person name="Peck A.I."/>
            <person name="Pelan S."/>
            <person name="Phelps K."/>
            <person name="Phillimore B.J."/>
            <person name="Plumb R."/>
            <person name="Rajan J."/>
            <person name="Raymond C."/>
            <person name="Rouse G."/>
            <person name="Saenphimmachak C."/>
            <person name="Sehra H.K."/>
            <person name="Sheridan E."/>
            <person name="Shownkeen R."/>
            <person name="Sims S."/>
            <person name="Skuce C.D."/>
            <person name="Smith M."/>
            <person name="Steward C."/>
            <person name="Subramanian S."/>
            <person name="Sycamore N."/>
            <person name="Tracey A."/>
            <person name="Tromans A."/>
            <person name="Van Helmond Z."/>
            <person name="Wall M."/>
            <person name="Wallis J.M."/>
            <person name="White S."/>
            <person name="Whitehead S.L."/>
            <person name="Wilkinson J.E."/>
            <person name="Willey D.L."/>
            <person name="Williams H."/>
            <person name="Wilming L."/>
            <person name="Wray P.W."/>
            <person name="Wu Z."/>
            <person name="Coulson A."/>
            <person name="Vaudin M."/>
            <person name="Sulston J.E."/>
            <person name="Durbin R.M."/>
            <person name="Hubbard T."/>
            <person name="Wooster R."/>
            <person name="Dunham I."/>
            <person name="Carter N.P."/>
            <person name="McVean G."/>
            <person name="Ross M.T."/>
            <person name="Harrow J."/>
            <person name="Olson M.V."/>
            <person name="Beck S."/>
            <person name="Rogers J."/>
            <person name="Bentley D.R."/>
        </authorList>
    </citation>
    <scope>NUCLEOTIDE SEQUENCE [LARGE SCALE GENOMIC DNA]</scope>
</reference>
<reference key="4">
    <citation type="submission" date="2005-07" db="EMBL/GenBank/DDBJ databases">
        <authorList>
            <person name="Mural R.J."/>
            <person name="Istrail S."/>
            <person name="Sutton G.G."/>
            <person name="Florea L."/>
            <person name="Halpern A.L."/>
            <person name="Mobarry C.M."/>
            <person name="Lippert R."/>
            <person name="Walenz B."/>
            <person name="Shatkay H."/>
            <person name="Dew I."/>
            <person name="Miller J.R."/>
            <person name="Flanigan M.J."/>
            <person name="Edwards N.J."/>
            <person name="Bolanos R."/>
            <person name="Fasulo D."/>
            <person name="Halldorsson B.V."/>
            <person name="Hannenhalli S."/>
            <person name="Turner R."/>
            <person name="Yooseph S."/>
            <person name="Lu F."/>
            <person name="Nusskern D.R."/>
            <person name="Shue B.C."/>
            <person name="Zheng X.H."/>
            <person name="Zhong F."/>
            <person name="Delcher A.L."/>
            <person name="Huson D.H."/>
            <person name="Kravitz S.A."/>
            <person name="Mouchard L."/>
            <person name="Reinert K."/>
            <person name="Remington K.A."/>
            <person name="Clark A.G."/>
            <person name="Waterman M.S."/>
            <person name="Eichler E.E."/>
            <person name="Adams M.D."/>
            <person name="Hunkapiller M.W."/>
            <person name="Myers E.W."/>
            <person name="Venter J.C."/>
        </authorList>
    </citation>
    <scope>NUCLEOTIDE SEQUENCE [LARGE SCALE GENOMIC DNA]</scope>
</reference>
<reference key="5">
    <citation type="journal article" date="2004" name="Genome Res.">
        <title>The status, quality, and expansion of the NIH full-length cDNA project: the Mammalian Gene Collection (MGC).</title>
        <authorList>
            <consortium name="The MGC Project Team"/>
        </authorList>
    </citation>
    <scope>NUCLEOTIDE SEQUENCE [LARGE SCALE MRNA] (ISOFORM 1)</scope>
    <source>
        <tissue>Hippocampus</tissue>
        <tissue>Lymph</tissue>
    </source>
</reference>
<reference key="6">
    <citation type="journal article" date="2006" name="Nat. Biotechnol.">
        <title>A probability-based approach for high-throughput protein phosphorylation analysis and site localization.</title>
        <authorList>
            <person name="Beausoleil S.A."/>
            <person name="Villen J."/>
            <person name="Gerber S.A."/>
            <person name="Rush J."/>
            <person name="Gygi S.P."/>
        </authorList>
    </citation>
    <scope>IDENTIFICATION BY MASS SPECTROMETRY [LARGE SCALE ANALYSIS]</scope>
    <source>
        <tissue>Cervix carcinoma</tissue>
    </source>
</reference>